<protein>
    <recommendedName>
        <fullName evidence="1">NADH-quinone oxidoreductase subunit A</fullName>
        <ecNumber evidence="1">7.1.1.-</ecNumber>
    </recommendedName>
    <alternativeName>
        <fullName evidence="1">NADH dehydrogenase I subunit A</fullName>
    </alternativeName>
    <alternativeName>
        <fullName evidence="1">NDH-1 subunit A</fullName>
    </alternativeName>
    <alternativeName>
        <fullName evidence="1">NUO1</fullName>
    </alternativeName>
</protein>
<gene>
    <name evidence="1" type="primary">nuoA</name>
    <name type="ordered locus">ECP_2327</name>
</gene>
<dbReference type="EC" id="7.1.1.-" evidence="1"/>
<dbReference type="EMBL" id="CP000247">
    <property type="protein sequence ID" value="ABG70321.1"/>
    <property type="molecule type" value="Genomic_DNA"/>
</dbReference>
<dbReference type="RefSeq" id="WP_000062997.1">
    <property type="nucleotide sequence ID" value="NC_008253.1"/>
</dbReference>
<dbReference type="SMR" id="Q0TFF8"/>
<dbReference type="GeneID" id="93774886"/>
<dbReference type="KEGG" id="ecp:ECP_2327"/>
<dbReference type="HOGENOM" id="CLU_119549_2_0_6"/>
<dbReference type="Proteomes" id="UP000009182">
    <property type="component" value="Chromosome"/>
</dbReference>
<dbReference type="GO" id="GO:0030964">
    <property type="term" value="C:NADH dehydrogenase complex"/>
    <property type="evidence" value="ECO:0007669"/>
    <property type="project" value="TreeGrafter"/>
</dbReference>
<dbReference type="GO" id="GO:0005886">
    <property type="term" value="C:plasma membrane"/>
    <property type="evidence" value="ECO:0007669"/>
    <property type="project" value="UniProtKB-SubCell"/>
</dbReference>
<dbReference type="GO" id="GO:0008137">
    <property type="term" value="F:NADH dehydrogenase (ubiquinone) activity"/>
    <property type="evidence" value="ECO:0007669"/>
    <property type="project" value="InterPro"/>
</dbReference>
<dbReference type="GO" id="GO:0050136">
    <property type="term" value="F:NADH:ubiquinone reductase (non-electrogenic) activity"/>
    <property type="evidence" value="ECO:0007669"/>
    <property type="project" value="UniProtKB-UniRule"/>
</dbReference>
<dbReference type="GO" id="GO:0048038">
    <property type="term" value="F:quinone binding"/>
    <property type="evidence" value="ECO:0007669"/>
    <property type="project" value="UniProtKB-KW"/>
</dbReference>
<dbReference type="FunFam" id="1.20.58.1610:FF:000003">
    <property type="entry name" value="NADH-quinone oxidoreductase subunit A"/>
    <property type="match status" value="1"/>
</dbReference>
<dbReference type="Gene3D" id="1.20.58.1610">
    <property type="entry name" value="NADH:ubiquinone/plastoquinone oxidoreductase, chain 3"/>
    <property type="match status" value="1"/>
</dbReference>
<dbReference type="HAMAP" id="MF_01394">
    <property type="entry name" value="NDH1_NuoA"/>
    <property type="match status" value="1"/>
</dbReference>
<dbReference type="InterPro" id="IPR023043">
    <property type="entry name" value="NAD(P)H_OxRDtase_bac/plastid"/>
</dbReference>
<dbReference type="InterPro" id="IPR000440">
    <property type="entry name" value="NADH_UbQ/plastoQ_OxRdtase_su3"/>
</dbReference>
<dbReference type="InterPro" id="IPR038430">
    <property type="entry name" value="NDAH_ubi_oxred_su3_sf"/>
</dbReference>
<dbReference type="PANTHER" id="PTHR11058:SF21">
    <property type="entry name" value="NADH-QUINONE OXIDOREDUCTASE SUBUNIT A"/>
    <property type="match status" value="1"/>
</dbReference>
<dbReference type="PANTHER" id="PTHR11058">
    <property type="entry name" value="NADH-UBIQUINONE OXIDOREDUCTASE CHAIN 3"/>
    <property type="match status" value="1"/>
</dbReference>
<dbReference type="Pfam" id="PF00507">
    <property type="entry name" value="Oxidored_q4"/>
    <property type="match status" value="1"/>
</dbReference>
<organism>
    <name type="scientific">Escherichia coli O6:K15:H31 (strain 536 / UPEC)</name>
    <dbReference type="NCBI Taxonomy" id="362663"/>
    <lineage>
        <taxon>Bacteria</taxon>
        <taxon>Pseudomonadati</taxon>
        <taxon>Pseudomonadota</taxon>
        <taxon>Gammaproteobacteria</taxon>
        <taxon>Enterobacterales</taxon>
        <taxon>Enterobacteriaceae</taxon>
        <taxon>Escherichia</taxon>
    </lineage>
</organism>
<proteinExistence type="inferred from homology"/>
<comment type="function">
    <text evidence="1">NDH-1 shuttles electrons from NADH, via FMN and iron-sulfur (Fe-S) centers, to quinones in the respiratory chain. The immediate electron acceptor for the enzyme in this species is believed to be ubiquinone. Couples the redox reaction to proton translocation (for every two electrons transferred, four hydrogen ions are translocated across the cytoplasmic membrane), and thus conserves the redox energy in a proton gradient.</text>
</comment>
<comment type="catalytic activity">
    <reaction evidence="1">
        <text>a quinone + NADH + 5 H(+)(in) = a quinol + NAD(+) + 4 H(+)(out)</text>
        <dbReference type="Rhea" id="RHEA:57888"/>
        <dbReference type="ChEBI" id="CHEBI:15378"/>
        <dbReference type="ChEBI" id="CHEBI:24646"/>
        <dbReference type="ChEBI" id="CHEBI:57540"/>
        <dbReference type="ChEBI" id="CHEBI:57945"/>
        <dbReference type="ChEBI" id="CHEBI:132124"/>
    </reaction>
</comment>
<comment type="subunit">
    <text evidence="1">NDH-1 is composed of 13 different subunits. Subunits NuoA, H, J, K, L, M, N constitute the membrane sector of the complex.</text>
</comment>
<comment type="subcellular location">
    <subcellularLocation>
        <location evidence="1">Cell inner membrane</location>
        <topology evidence="1">Multi-pass membrane protein</topology>
    </subcellularLocation>
</comment>
<comment type="similarity">
    <text evidence="1">Belongs to the complex I subunit 3 family.</text>
</comment>
<sequence>MSMSTSTEVIAHHWAFAIFLIVAIGLCCLMLVGGWFLGGRARARSKNVPFESGIDSVGSARLRLSAKFYLVAMFFVIFDVEALYLFAWSTSIRESGWVGFVEAAIFIFVLLAGLVYLVRIGALDWTPARSRRERMNPETNSIANRQR</sequence>
<feature type="chain" id="PRO_0000362684" description="NADH-quinone oxidoreductase subunit A">
    <location>
        <begin position="1"/>
        <end position="147"/>
    </location>
</feature>
<feature type="transmembrane region" description="Helical" evidence="1">
    <location>
        <begin position="16"/>
        <end position="36"/>
    </location>
</feature>
<feature type="transmembrane region" description="Helical" evidence="1">
    <location>
        <begin position="68"/>
        <end position="88"/>
    </location>
</feature>
<feature type="transmembrane region" description="Helical" evidence="1">
    <location>
        <begin position="98"/>
        <end position="118"/>
    </location>
</feature>
<evidence type="ECO:0000255" key="1">
    <source>
        <dbReference type="HAMAP-Rule" id="MF_01394"/>
    </source>
</evidence>
<reference key="1">
    <citation type="journal article" date="2006" name="Mol. Microbiol.">
        <title>Role of pathogenicity island-associated integrases in the genome plasticity of uropathogenic Escherichia coli strain 536.</title>
        <authorList>
            <person name="Hochhut B."/>
            <person name="Wilde C."/>
            <person name="Balling G."/>
            <person name="Middendorf B."/>
            <person name="Dobrindt U."/>
            <person name="Brzuszkiewicz E."/>
            <person name="Gottschalk G."/>
            <person name="Carniel E."/>
            <person name="Hacker J."/>
        </authorList>
    </citation>
    <scope>NUCLEOTIDE SEQUENCE [LARGE SCALE GENOMIC DNA]</scope>
    <source>
        <strain>536 / UPEC</strain>
    </source>
</reference>
<keyword id="KW-0997">Cell inner membrane</keyword>
<keyword id="KW-1003">Cell membrane</keyword>
<keyword id="KW-0472">Membrane</keyword>
<keyword id="KW-0520">NAD</keyword>
<keyword id="KW-0874">Quinone</keyword>
<keyword id="KW-1278">Translocase</keyword>
<keyword id="KW-0812">Transmembrane</keyword>
<keyword id="KW-1133">Transmembrane helix</keyword>
<keyword id="KW-0813">Transport</keyword>
<keyword id="KW-0830">Ubiquinone</keyword>
<accession>Q0TFF8</accession>
<name>NUOA_ECOL5</name>